<protein>
    <recommendedName>
        <fullName evidence="1">tRNA N6-adenosine threonylcarbamoyltransferase</fullName>
        <ecNumber evidence="1">2.3.1.234</ecNumber>
    </recommendedName>
    <alternativeName>
        <fullName evidence="1">N6-L-threonylcarbamoyladenine synthase</fullName>
        <shortName evidence="1">t(6)A synthase</shortName>
    </alternativeName>
    <alternativeName>
        <fullName evidence="1">t(6)A37 threonylcarbamoyladenosine biosynthesis protein TsaD</fullName>
    </alternativeName>
    <alternativeName>
        <fullName evidence="1">tRNA threonylcarbamoyladenosine biosynthesis protein TsaD</fullName>
    </alternativeName>
</protein>
<organism>
    <name type="scientific">Streptococcus pneumoniae (strain CGSP14)</name>
    <dbReference type="NCBI Taxonomy" id="516950"/>
    <lineage>
        <taxon>Bacteria</taxon>
        <taxon>Bacillati</taxon>
        <taxon>Bacillota</taxon>
        <taxon>Bacilli</taxon>
        <taxon>Lactobacillales</taxon>
        <taxon>Streptococcaceae</taxon>
        <taxon>Streptococcus</taxon>
    </lineage>
</organism>
<feature type="chain" id="PRO_1000146030" description="tRNA N6-adenosine threonylcarbamoyltransferase">
    <location>
        <begin position="1"/>
        <end position="336"/>
    </location>
</feature>
<feature type="binding site" evidence="1">
    <location>
        <position position="114"/>
    </location>
    <ligand>
        <name>Fe cation</name>
        <dbReference type="ChEBI" id="CHEBI:24875"/>
    </ligand>
</feature>
<feature type="binding site" evidence="1">
    <location>
        <position position="118"/>
    </location>
    <ligand>
        <name>Fe cation</name>
        <dbReference type="ChEBI" id="CHEBI:24875"/>
    </ligand>
</feature>
<feature type="binding site" evidence="1">
    <location>
        <begin position="136"/>
        <end position="140"/>
    </location>
    <ligand>
        <name>substrate</name>
    </ligand>
</feature>
<feature type="binding site" evidence="1">
    <location>
        <position position="169"/>
    </location>
    <ligand>
        <name>substrate</name>
    </ligand>
</feature>
<feature type="binding site" evidence="1">
    <location>
        <position position="182"/>
    </location>
    <ligand>
        <name>substrate</name>
    </ligand>
</feature>
<feature type="binding site" evidence="1">
    <location>
        <position position="186"/>
    </location>
    <ligand>
        <name>substrate</name>
    </ligand>
</feature>
<feature type="binding site" evidence="1">
    <location>
        <position position="275"/>
    </location>
    <ligand>
        <name>substrate</name>
    </ligand>
</feature>
<feature type="binding site" evidence="1">
    <location>
        <position position="301"/>
    </location>
    <ligand>
        <name>Fe cation</name>
        <dbReference type="ChEBI" id="CHEBI:24875"/>
    </ligand>
</feature>
<name>TSAD_STRPS</name>
<evidence type="ECO:0000255" key="1">
    <source>
        <dbReference type="HAMAP-Rule" id="MF_01445"/>
    </source>
</evidence>
<comment type="function">
    <text evidence="1">Required for the formation of a threonylcarbamoyl group on adenosine at position 37 (t(6)A37) in tRNAs that read codons beginning with adenine. Is involved in the transfer of the threonylcarbamoyl moiety of threonylcarbamoyl-AMP (TC-AMP) to the N6 group of A37, together with TsaE and TsaB. TsaD likely plays a direct catalytic role in this reaction.</text>
</comment>
<comment type="catalytic activity">
    <reaction evidence="1">
        <text>L-threonylcarbamoyladenylate + adenosine(37) in tRNA = N(6)-L-threonylcarbamoyladenosine(37) in tRNA + AMP + H(+)</text>
        <dbReference type="Rhea" id="RHEA:37059"/>
        <dbReference type="Rhea" id="RHEA-COMP:10162"/>
        <dbReference type="Rhea" id="RHEA-COMP:10163"/>
        <dbReference type="ChEBI" id="CHEBI:15378"/>
        <dbReference type="ChEBI" id="CHEBI:73682"/>
        <dbReference type="ChEBI" id="CHEBI:74411"/>
        <dbReference type="ChEBI" id="CHEBI:74418"/>
        <dbReference type="ChEBI" id="CHEBI:456215"/>
        <dbReference type="EC" id="2.3.1.234"/>
    </reaction>
</comment>
<comment type="cofactor">
    <cofactor evidence="1">
        <name>Fe(2+)</name>
        <dbReference type="ChEBI" id="CHEBI:29033"/>
    </cofactor>
    <text evidence="1">Binds 1 Fe(2+) ion per subunit.</text>
</comment>
<comment type="subcellular location">
    <subcellularLocation>
        <location evidence="1">Cytoplasm</location>
    </subcellularLocation>
</comment>
<comment type="similarity">
    <text evidence="1">Belongs to the KAE1 / TsaD family.</text>
</comment>
<accession>B2IRL3</accession>
<gene>
    <name evidence="1" type="primary">tsaD</name>
    <name type="synonym">gcp</name>
    <name type="ordered locus">SPCG_0132</name>
</gene>
<keyword id="KW-0012">Acyltransferase</keyword>
<keyword id="KW-0963">Cytoplasm</keyword>
<keyword id="KW-0408">Iron</keyword>
<keyword id="KW-0479">Metal-binding</keyword>
<keyword id="KW-0808">Transferase</keyword>
<keyword id="KW-0819">tRNA processing</keyword>
<proteinExistence type="inferred from homology"/>
<reference key="1">
    <citation type="journal article" date="2009" name="BMC Genomics">
        <title>Genome evolution driven by host adaptations results in a more virulent and antimicrobial-resistant Streptococcus pneumoniae serotype 14.</title>
        <authorList>
            <person name="Ding F."/>
            <person name="Tang P."/>
            <person name="Hsu M.-H."/>
            <person name="Cui P."/>
            <person name="Hu S."/>
            <person name="Yu J."/>
            <person name="Chiu C.-H."/>
        </authorList>
    </citation>
    <scope>NUCLEOTIDE SEQUENCE [LARGE SCALE GENOMIC DNA]</scope>
    <source>
        <strain>CGSP14</strain>
    </source>
</reference>
<sequence length="336" mass="36140">MKDRYILAFETSCDETSVAVLKNDDELLSNVIASQIESHKRFGGVVPEVASRHHVEVITACIEEALAEAGITEEDVTAVAVTYGPGLVGALLVGLSAAKAFAWAHGLPLIPVNHMAGHLMAAQSVEPLEFPLLALLVSGGHTELVYVSEAGDYKIVGETRDDAVGEAYDKVGRVMGLTYPAGREIDELAHQGQDIYDFPRAMIKEDNLEFSFSGLKSAFINLHHNAEQKGESLSTEDLCASFQAAVLDILMAKTKKALEKYPVKTLVVAGGVAANKGLRERLAAEVTDVKVIIPPLRLCGDNAGMIAYASVSEWNKENFAGWNLNAKPSLAFDTME</sequence>
<dbReference type="EC" id="2.3.1.234" evidence="1"/>
<dbReference type="EMBL" id="CP001033">
    <property type="protein sequence ID" value="ACB89384.1"/>
    <property type="molecule type" value="Genomic_DNA"/>
</dbReference>
<dbReference type="RefSeq" id="WP_000655041.1">
    <property type="nucleotide sequence ID" value="NC_010582.1"/>
</dbReference>
<dbReference type="SMR" id="B2IRL3"/>
<dbReference type="KEGG" id="spw:SPCG_0132"/>
<dbReference type="HOGENOM" id="CLU_023208_0_2_9"/>
<dbReference type="GO" id="GO:0005737">
    <property type="term" value="C:cytoplasm"/>
    <property type="evidence" value="ECO:0007669"/>
    <property type="project" value="UniProtKB-SubCell"/>
</dbReference>
<dbReference type="GO" id="GO:0005506">
    <property type="term" value="F:iron ion binding"/>
    <property type="evidence" value="ECO:0007669"/>
    <property type="project" value="UniProtKB-UniRule"/>
</dbReference>
<dbReference type="GO" id="GO:0061711">
    <property type="term" value="F:N(6)-L-threonylcarbamoyladenine synthase activity"/>
    <property type="evidence" value="ECO:0007669"/>
    <property type="project" value="UniProtKB-EC"/>
</dbReference>
<dbReference type="GO" id="GO:0002949">
    <property type="term" value="P:tRNA threonylcarbamoyladenosine modification"/>
    <property type="evidence" value="ECO:0007669"/>
    <property type="project" value="UniProtKB-UniRule"/>
</dbReference>
<dbReference type="CDD" id="cd24133">
    <property type="entry name" value="ASKHA_NBD_TsaD_bac"/>
    <property type="match status" value="1"/>
</dbReference>
<dbReference type="FunFam" id="3.30.420.40:FF:000012">
    <property type="entry name" value="tRNA N6-adenosine threonylcarbamoyltransferase"/>
    <property type="match status" value="1"/>
</dbReference>
<dbReference type="FunFam" id="3.30.420.40:FF:000040">
    <property type="entry name" value="tRNA N6-adenosine threonylcarbamoyltransferase"/>
    <property type="match status" value="1"/>
</dbReference>
<dbReference type="Gene3D" id="3.30.420.40">
    <property type="match status" value="2"/>
</dbReference>
<dbReference type="HAMAP" id="MF_01445">
    <property type="entry name" value="TsaD"/>
    <property type="match status" value="1"/>
</dbReference>
<dbReference type="InterPro" id="IPR043129">
    <property type="entry name" value="ATPase_NBD"/>
</dbReference>
<dbReference type="InterPro" id="IPR000905">
    <property type="entry name" value="Gcp-like_dom"/>
</dbReference>
<dbReference type="InterPro" id="IPR017861">
    <property type="entry name" value="KAE1/TsaD"/>
</dbReference>
<dbReference type="InterPro" id="IPR017860">
    <property type="entry name" value="Peptidase_M22_CS"/>
</dbReference>
<dbReference type="InterPro" id="IPR022450">
    <property type="entry name" value="TsaD"/>
</dbReference>
<dbReference type="NCBIfam" id="TIGR00329">
    <property type="entry name" value="gcp_kae1"/>
    <property type="match status" value="1"/>
</dbReference>
<dbReference type="NCBIfam" id="TIGR03723">
    <property type="entry name" value="T6A_TsaD_YgjD"/>
    <property type="match status" value="1"/>
</dbReference>
<dbReference type="PANTHER" id="PTHR11735">
    <property type="entry name" value="TRNA N6-ADENOSINE THREONYLCARBAMOYLTRANSFERASE"/>
    <property type="match status" value="1"/>
</dbReference>
<dbReference type="PANTHER" id="PTHR11735:SF6">
    <property type="entry name" value="TRNA N6-ADENOSINE THREONYLCARBAMOYLTRANSFERASE, MITOCHONDRIAL"/>
    <property type="match status" value="1"/>
</dbReference>
<dbReference type="Pfam" id="PF00814">
    <property type="entry name" value="TsaD"/>
    <property type="match status" value="1"/>
</dbReference>
<dbReference type="PRINTS" id="PR00789">
    <property type="entry name" value="OSIALOPTASE"/>
</dbReference>
<dbReference type="SUPFAM" id="SSF53067">
    <property type="entry name" value="Actin-like ATPase domain"/>
    <property type="match status" value="1"/>
</dbReference>
<dbReference type="PROSITE" id="PS01016">
    <property type="entry name" value="GLYCOPROTEASE"/>
    <property type="match status" value="1"/>
</dbReference>